<protein>
    <recommendedName>
        <fullName evidence="1">Large ribosomal subunit protein bL20</fullName>
    </recommendedName>
    <alternativeName>
        <fullName evidence="2">50S ribosomal protein L20</fullName>
    </alternativeName>
</protein>
<accession>A1UHA9</accession>
<feature type="chain" id="PRO_1000049014" description="Large ribosomal subunit protein bL20">
    <location>
        <begin position="1"/>
        <end position="129"/>
    </location>
</feature>
<comment type="function">
    <text evidence="1">Binds directly to 23S ribosomal RNA and is necessary for the in vitro assembly process of the 50S ribosomal subunit. It is not involved in the protein synthesizing functions of that subunit.</text>
</comment>
<comment type="similarity">
    <text evidence="1">Belongs to the bacterial ribosomal protein bL20 family.</text>
</comment>
<name>RL20_MYCSK</name>
<dbReference type="EMBL" id="CP000518">
    <property type="protein sequence ID" value="ABL92217.1"/>
    <property type="molecule type" value="Genomic_DNA"/>
</dbReference>
<dbReference type="SMR" id="A1UHA9"/>
<dbReference type="STRING" id="189918.Mkms_3023"/>
<dbReference type="KEGG" id="mkm:Mkms_3023"/>
<dbReference type="HOGENOM" id="CLU_123265_0_0_11"/>
<dbReference type="OrthoDB" id="9808966at2"/>
<dbReference type="GO" id="GO:1990904">
    <property type="term" value="C:ribonucleoprotein complex"/>
    <property type="evidence" value="ECO:0007669"/>
    <property type="project" value="UniProtKB-KW"/>
</dbReference>
<dbReference type="GO" id="GO:0005840">
    <property type="term" value="C:ribosome"/>
    <property type="evidence" value="ECO:0007669"/>
    <property type="project" value="UniProtKB-KW"/>
</dbReference>
<dbReference type="GO" id="GO:0019843">
    <property type="term" value="F:rRNA binding"/>
    <property type="evidence" value="ECO:0007669"/>
    <property type="project" value="UniProtKB-UniRule"/>
</dbReference>
<dbReference type="GO" id="GO:0003735">
    <property type="term" value="F:structural constituent of ribosome"/>
    <property type="evidence" value="ECO:0007669"/>
    <property type="project" value="InterPro"/>
</dbReference>
<dbReference type="GO" id="GO:0000027">
    <property type="term" value="P:ribosomal large subunit assembly"/>
    <property type="evidence" value="ECO:0007669"/>
    <property type="project" value="UniProtKB-UniRule"/>
</dbReference>
<dbReference type="GO" id="GO:0006412">
    <property type="term" value="P:translation"/>
    <property type="evidence" value="ECO:0007669"/>
    <property type="project" value="InterPro"/>
</dbReference>
<dbReference type="CDD" id="cd07026">
    <property type="entry name" value="Ribosomal_L20"/>
    <property type="match status" value="1"/>
</dbReference>
<dbReference type="FunFam" id="1.10.1900.20:FF:000001">
    <property type="entry name" value="50S ribosomal protein L20"/>
    <property type="match status" value="1"/>
</dbReference>
<dbReference type="Gene3D" id="6.10.160.10">
    <property type="match status" value="1"/>
</dbReference>
<dbReference type="Gene3D" id="1.10.1900.20">
    <property type="entry name" value="Ribosomal protein L20"/>
    <property type="match status" value="1"/>
</dbReference>
<dbReference type="HAMAP" id="MF_00382">
    <property type="entry name" value="Ribosomal_bL20"/>
    <property type="match status" value="1"/>
</dbReference>
<dbReference type="InterPro" id="IPR005813">
    <property type="entry name" value="Ribosomal_bL20"/>
</dbReference>
<dbReference type="InterPro" id="IPR049946">
    <property type="entry name" value="RIBOSOMAL_L20_CS"/>
</dbReference>
<dbReference type="InterPro" id="IPR035566">
    <property type="entry name" value="Ribosomal_protein_bL20_C"/>
</dbReference>
<dbReference type="NCBIfam" id="TIGR01032">
    <property type="entry name" value="rplT_bact"/>
    <property type="match status" value="1"/>
</dbReference>
<dbReference type="PANTHER" id="PTHR10986">
    <property type="entry name" value="39S RIBOSOMAL PROTEIN L20"/>
    <property type="match status" value="1"/>
</dbReference>
<dbReference type="Pfam" id="PF00453">
    <property type="entry name" value="Ribosomal_L20"/>
    <property type="match status" value="1"/>
</dbReference>
<dbReference type="PRINTS" id="PR00062">
    <property type="entry name" value="RIBOSOMALL20"/>
</dbReference>
<dbReference type="SUPFAM" id="SSF74731">
    <property type="entry name" value="Ribosomal protein L20"/>
    <property type="match status" value="1"/>
</dbReference>
<dbReference type="PROSITE" id="PS00937">
    <property type="entry name" value="RIBOSOMAL_L20"/>
    <property type="match status" value="1"/>
</dbReference>
<organism>
    <name type="scientific">Mycobacterium sp. (strain KMS)</name>
    <dbReference type="NCBI Taxonomy" id="189918"/>
    <lineage>
        <taxon>Bacteria</taxon>
        <taxon>Bacillati</taxon>
        <taxon>Actinomycetota</taxon>
        <taxon>Actinomycetes</taxon>
        <taxon>Mycobacteriales</taxon>
        <taxon>Mycobacteriaceae</taxon>
        <taxon>Mycobacterium</taxon>
    </lineage>
</organism>
<proteinExistence type="inferred from homology"/>
<evidence type="ECO:0000255" key="1">
    <source>
        <dbReference type="HAMAP-Rule" id="MF_00382"/>
    </source>
</evidence>
<evidence type="ECO:0000305" key="2"/>
<reference key="1">
    <citation type="submission" date="2006-12" db="EMBL/GenBank/DDBJ databases">
        <title>Complete sequence of chromosome of Mycobacterium sp. KMS.</title>
        <authorList>
            <consortium name="US DOE Joint Genome Institute"/>
            <person name="Copeland A."/>
            <person name="Lucas S."/>
            <person name="Lapidus A."/>
            <person name="Barry K."/>
            <person name="Detter J.C."/>
            <person name="Glavina del Rio T."/>
            <person name="Hammon N."/>
            <person name="Israni S."/>
            <person name="Dalin E."/>
            <person name="Tice H."/>
            <person name="Pitluck S."/>
            <person name="Kiss H."/>
            <person name="Brettin T."/>
            <person name="Bruce D."/>
            <person name="Han C."/>
            <person name="Tapia R."/>
            <person name="Gilna P."/>
            <person name="Schmutz J."/>
            <person name="Larimer F."/>
            <person name="Land M."/>
            <person name="Hauser L."/>
            <person name="Kyrpides N."/>
            <person name="Mikhailova N."/>
            <person name="Miller C.D."/>
            <person name="Richardson P."/>
        </authorList>
    </citation>
    <scope>NUCLEOTIDE SEQUENCE [LARGE SCALE GENOMIC DNA]</scope>
    <source>
        <strain>KMS</strain>
    </source>
</reference>
<sequence length="129" mass="14411">MARVKRAVNAQKKRRTVLKASKGYRGQRSRLYRKAKEQQLHSLTYAYRDRRARKGEFRKLWISRINAAARANDITYNRLIQGLKAAGVEVDRKNLAEIAVSDAAAFTALVEVAKAALPEDVNAPSGEAA</sequence>
<keyword id="KW-0687">Ribonucleoprotein</keyword>
<keyword id="KW-0689">Ribosomal protein</keyword>
<keyword id="KW-0694">RNA-binding</keyword>
<keyword id="KW-0699">rRNA-binding</keyword>
<gene>
    <name evidence="1" type="primary">rplT</name>
    <name type="ordered locus">Mkms_3023</name>
</gene>